<name>CHEY1_HELPJ</name>
<proteinExistence type="inferred from homology"/>
<sequence length="124" mass="13926">MKLLVVDDSSTMRRIIKNTLSRLGYEDVLEAEHGVEAWEKLDANADTKVLITDWNMPEMNGLDLVKKVRADNRFKEIPIIMITTEGGKAEVITALKAGVNNYIVKPFTPQVLKEKLEVVLGTND</sequence>
<gene>
    <name type="primary">cheY1</name>
    <name type="ordered locus">jhp_0358</name>
</gene>
<feature type="chain" id="PRO_0000081051" description="Chemotaxis protein CheY1">
    <location>
        <begin position="1"/>
        <end position="124"/>
    </location>
</feature>
<feature type="domain" description="Response regulatory" evidence="4">
    <location>
        <begin position="2"/>
        <end position="120"/>
    </location>
</feature>
<feature type="binding site" evidence="1">
    <location>
        <position position="7"/>
    </location>
    <ligand>
        <name>Mg(2+)</name>
        <dbReference type="ChEBI" id="CHEBI:18420"/>
    </ligand>
</feature>
<feature type="binding site" evidence="3">
    <location>
        <position position="8"/>
    </location>
    <ligand>
        <name>Mg(2+)</name>
        <dbReference type="ChEBI" id="CHEBI:18420"/>
    </ligand>
</feature>
<feature type="binding site" evidence="3">
    <location>
        <position position="53"/>
    </location>
    <ligand>
        <name>Mg(2+)</name>
        <dbReference type="ChEBI" id="CHEBI:18420"/>
    </ligand>
</feature>
<feature type="binding site" evidence="3">
    <location>
        <position position="55"/>
    </location>
    <ligand>
        <name>Mg(2+)</name>
        <dbReference type="ChEBI" id="CHEBI:18420"/>
    </ligand>
</feature>
<feature type="modified residue" description="4-aspartylphosphate" evidence="4">
    <location>
        <position position="53"/>
    </location>
</feature>
<protein>
    <recommendedName>
        <fullName>Chemotaxis protein CheY1</fullName>
    </recommendedName>
</protein>
<dbReference type="EMBL" id="AE001439">
    <property type="protein sequence ID" value="AAD05946.1"/>
    <property type="molecule type" value="Genomic_DNA"/>
</dbReference>
<dbReference type="PIR" id="F71941">
    <property type="entry name" value="F71941"/>
</dbReference>
<dbReference type="RefSeq" id="WP_000772146.1">
    <property type="nucleotide sequence ID" value="NZ_CP011330.1"/>
</dbReference>
<dbReference type="SMR" id="Q9ZM64"/>
<dbReference type="KEGG" id="hpj:jhp_0358"/>
<dbReference type="PATRIC" id="fig|85963.30.peg.653"/>
<dbReference type="eggNOG" id="COG0745">
    <property type="taxonomic scope" value="Bacteria"/>
</dbReference>
<dbReference type="Proteomes" id="UP000000804">
    <property type="component" value="Chromosome"/>
</dbReference>
<dbReference type="GO" id="GO:0005737">
    <property type="term" value="C:cytoplasm"/>
    <property type="evidence" value="ECO:0007669"/>
    <property type="project" value="UniProtKB-SubCell"/>
</dbReference>
<dbReference type="GO" id="GO:0046872">
    <property type="term" value="F:metal ion binding"/>
    <property type="evidence" value="ECO:0007669"/>
    <property type="project" value="UniProtKB-KW"/>
</dbReference>
<dbReference type="GO" id="GO:0097588">
    <property type="term" value="P:archaeal or bacterial-type flagellum-dependent cell motility"/>
    <property type="evidence" value="ECO:0007669"/>
    <property type="project" value="UniProtKB-KW"/>
</dbReference>
<dbReference type="GO" id="GO:0006935">
    <property type="term" value="P:chemotaxis"/>
    <property type="evidence" value="ECO:0007669"/>
    <property type="project" value="UniProtKB-KW"/>
</dbReference>
<dbReference type="GO" id="GO:0000160">
    <property type="term" value="P:phosphorelay signal transduction system"/>
    <property type="evidence" value="ECO:0007669"/>
    <property type="project" value="UniProtKB-KW"/>
</dbReference>
<dbReference type="CDD" id="cd19923">
    <property type="entry name" value="REC_CheY_CheY3"/>
    <property type="match status" value="1"/>
</dbReference>
<dbReference type="Gene3D" id="3.40.50.2300">
    <property type="match status" value="1"/>
</dbReference>
<dbReference type="InterPro" id="IPR050595">
    <property type="entry name" value="Bact_response_regulator"/>
</dbReference>
<dbReference type="InterPro" id="IPR011006">
    <property type="entry name" value="CheY-like_superfamily"/>
</dbReference>
<dbReference type="InterPro" id="IPR001789">
    <property type="entry name" value="Sig_transdc_resp-reg_receiver"/>
</dbReference>
<dbReference type="PANTHER" id="PTHR44591:SF3">
    <property type="entry name" value="RESPONSE REGULATORY DOMAIN-CONTAINING PROTEIN"/>
    <property type="match status" value="1"/>
</dbReference>
<dbReference type="PANTHER" id="PTHR44591">
    <property type="entry name" value="STRESS RESPONSE REGULATOR PROTEIN 1"/>
    <property type="match status" value="1"/>
</dbReference>
<dbReference type="Pfam" id="PF00072">
    <property type="entry name" value="Response_reg"/>
    <property type="match status" value="1"/>
</dbReference>
<dbReference type="SMART" id="SM00448">
    <property type="entry name" value="REC"/>
    <property type="match status" value="1"/>
</dbReference>
<dbReference type="SUPFAM" id="SSF52172">
    <property type="entry name" value="CheY-like"/>
    <property type="match status" value="1"/>
</dbReference>
<dbReference type="PROSITE" id="PS50110">
    <property type="entry name" value="RESPONSE_REGULATORY"/>
    <property type="match status" value="1"/>
</dbReference>
<keyword id="KW-0145">Chemotaxis</keyword>
<keyword id="KW-0963">Cytoplasm</keyword>
<keyword id="KW-0283">Flagellar rotation</keyword>
<keyword id="KW-0460">Magnesium</keyword>
<keyword id="KW-0479">Metal-binding</keyword>
<keyword id="KW-0597">Phosphoprotein</keyword>
<keyword id="KW-0902">Two-component regulatory system</keyword>
<comment type="function">
    <text evidence="3">Chemotactic response regulator protein that modulates the rotation direction of bacterial flagellar motors. Plays an important role in the colonization and infection of Helicobacter pylori. Upon phosphorylation by CheA, interacts with the flagellar motor protein FliM to cause clockwise flagellar rotation and bacterial reversals, as opposed to straight swimming when CheY1 is not phosphorylated.</text>
</comment>
<comment type="cofactor">
    <cofactor evidence="3">
        <name>Mg(2+)</name>
        <dbReference type="ChEBI" id="CHEBI:18420"/>
    </cofactor>
    <text evidence="2">Binds 1 Mg(2+) ion per subunit.</text>
</comment>
<comment type="subunit">
    <text evidence="3">Interacts (when phosphorylated) with FliM.</text>
</comment>
<comment type="subcellular location">
    <subcellularLocation>
        <location evidence="5">Cytoplasm</location>
    </subcellularLocation>
</comment>
<comment type="PTM">
    <text evidence="3">Phosphorylated by CheAY. Dephosphorylated (inactivated) by CheZ.</text>
</comment>
<accession>Q9ZM64</accession>
<organism>
    <name type="scientific">Helicobacter pylori (strain J99 / ATCC 700824)</name>
    <name type="common">Campylobacter pylori J99</name>
    <dbReference type="NCBI Taxonomy" id="85963"/>
    <lineage>
        <taxon>Bacteria</taxon>
        <taxon>Pseudomonadati</taxon>
        <taxon>Campylobacterota</taxon>
        <taxon>Epsilonproteobacteria</taxon>
        <taxon>Campylobacterales</taxon>
        <taxon>Helicobacteraceae</taxon>
        <taxon>Helicobacter</taxon>
    </lineage>
</organism>
<evidence type="ECO:0000250" key="1">
    <source>
        <dbReference type="UniProtKB" id="A0A0H3AMJ9"/>
    </source>
</evidence>
<evidence type="ECO:0000250" key="2">
    <source>
        <dbReference type="UniProtKB" id="P0AE67"/>
    </source>
</evidence>
<evidence type="ECO:0000250" key="3">
    <source>
        <dbReference type="UniProtKB" id="P71403"/>
    </source>
</evidence>
<evidence type="ECO:0000255" key="4">
    <source>
        <dbReference type="PROSITE-ProRule" id="PRU00169"/>
    </source>
</evidence>
<evidence type="ECO:0000305" key="5"/>
<reference key="1">
    <citation type="journal article" date="1999" name="Nature">
        <title>Genomic sequence comparison of two unrelated isolates of the human gastric pathogen Helicobacter pylori.</title>
        <authorList>
            <person name="Alm R.A."/>
            <person name="Ling L.-S.L."/>
            <person name="Moir D.T."/>
            <person name="King B.L."/>
            <person name="Brown E.D."/>
            <person name="Doig P.C."/>
            <person name="Smith D.R."/>
            <person name="Noonan B."/>
            <person name="Guild B.C."/>
            <person name="deJonge B.L."/>
            <person name="Carmel G."/>
            <person name="Tummino P.J."/>
            <person name="Caruso A."/>
            <person name="Uria-Nickelsen M."/>
            <person name="Mills D.M."/>
            <person name="Ives C."/>
            <person name="Gibson R."/>
            <person name="Merberg D."/>
            <person name="Mills S.D."/>
            <person name="Jiang Q."/>
            <person name="Taylor D.E."/>
            <person name="Vovis G.F."/>
            <person name="Trust T.J."/>
        </authorList>
    </citation>
    <scope>NUCLEOTIDE SEQUENCE [LARGE SCALE GENOMIC DNA]</scope>
    <source>
        <strain>J99 / ATCC 700824</strain>
    </source>
</reference>